<proteinExistence type="inferred from homology"/>
<gene>
    <name evidence="1" type="primary">whiA</name>
    <name type="ordered locus">CBO3375</name>
    <name type="ordered locus">CLC_3318</name>
</gene>
<protein>
    <recommendedName>
        <fullName evidence="1">Probable cell division protein WhiA</fullName>
    </recommendedName>
</protein>
<dbReference type="EMBL" id="CP000727">
    <property type="protein sequence ID" value="ABS37671.1"/>
    <property type="molecule type" value="Genomic_DNA"/>
</dbReference>
<dbReference type="EMBL" id="AM412317">
    <property type="protein sequence ID" value="CAL84934.1"/>
    <property type="molecule type" value="Genomic_DNA"/>
</dbReference>
<dbReference type="RefSeq" id="WP_003357358.1">
    <property type="nucleotide sequence ID" value="NC_009698.1"/>
</dbReference>
<dbReference type="RefSeq" id="YP_001255857.1">
    <property type="nucleotide sequence ID" value="NC_009495.1"/>
</dbReference>
<dbReference type="RefSeq" id="YP_001389098.1">
    <property type="nucleotide sequence ID" value="NC_009698.1"/>
</dbReference>
<dbReference type="SMR" id="A5I7A0"/>
<dbReference type="GeneID" id="5187629"/>
<dbReference type="KEGG" id="cbh:CLC_3318"/>
<dbReference type="KEGG" id="cbo:CBO3375"/>
<dbReference type="PATRIC" id="fig|413999.7.peg.3349"/>
<dbReference type="HOGENOM" id="CLU_053282_0_0_9"/>
<dbReference type="PRO" id="PR:A5I7A0"/>
<dbReference type="Proteomes" id="UP000001986">
    <property type="component" value="Chromosome"/>
</dbReference>
<dbReference type="GO" id="GO:0003677">
    <property type="term" value="F:DNA binding"/>
    <property type="evidence" value="ECO:0007669"/>
    <property type="project" value="UniProtKB-UniRule"/>
</dbReference>
<dbReference type="GO" id="GO:0004519">
    <property type="term" value="F:endonuclease activity"/>
    <property type="evidence" value="ECO:0007669"/>
    <property type="project" value="InterPro"/>
</dbReference>
<dbReference type="GO" id="GO:0051301">
    <property type="term" value="P:cell division"/>
    <property type="evidence" value="ECO:0007669"/>
    <property type="project" value="UniProtKB-UniRule"/>
</dbReference>
<dbReference type="GO" id="GO:0043937">
    <property type="term" value="P:regulation of sporulation"/>
    <property type="evidence" value="ECO:0000318"/>
    <property type="project" value="GO_Central"/>
</dbReference>
<dbReference type="Gene3D" id="3.10.28.10">
    <property type="entry name" value="Homing endonucleases"/>
    <property type="match status" value="1"/>
</dbReference>
<dbReference type="HAMAP" id="MF_01420">
    <property type="entry name" value="HTH_type_WhiA"/>
    <property type="match status" value="1"/>
</dbReference>
<dbReference type="InterPro" id="IPR027434">
    <property type="entry name" value="Homing_endonucl"/>
</dbReference>
<dbReference type="InterPro" id="IPR004042">
    <property type="entry name" value="Intein_endonuc_central"/>
</dbReference>
<dbReference type="InterPro" id="IPR018478">
    <property type="entry name" value="Sporu_reg_WhiA_N_dom"/>
</dbReference>
<dbReference type="InterPro" id="IPR003802">
    <property type="entry name" value="Sporulation_regulator_WhiA"/>
</dbReference>
<dbReference type="InterPro" id="IPR023054">
    <property type="entry name" value="Sporulation_regulator_WhiA_C"/>
</dbReference>
<dbReference type="InterPro" id="IPR039518">
    <property type="entry name" value="WhiA_LAGLIDADG_dom"/>
</dbReference>
<dbReference type="NCBIfam" id="TIGR00647">
    <property type="entry name" value="DNA_bind_WhiA"/>
    <property type="match status" value="1"/>
</dbReference>
<dbReference type="PANTHER" id="PTHR37307">
    <property type="entry name" value="CELL DIVISION PROTEIN WHIA-RELATED"/>
    <property type="match status" value="1"/>
</dbReference>
<dbReference type="PANTHER" id="PTHR37307:SF1">
    <property type="entry name" value="CELL DIVISION PROTEIN WHIA-RELATED"/>
    <property type="match status" value="1"/>
</dbReference>
<dbReference type="Pfam" id="PF02650">
    <property type="entry name" value="HTH_WhiA"/>
    <property type="match status" value="1"/>
</dbReference>
<dbReference type="Pfam" id="PF14527">
    <property type="entry name" value="LAGLIDADG_WhiA"/>
    <property type="match status" value="1"/>
</dbReference>
<dbReference type="Pfam" id="PF10298">
    <property type="entry name" value="WhiA_N"/>
    <property type="match status" value="1"/>
</dbReference>
<dbReference type="SUPFAM" id="SSF55608">
    <property type="entry name" value="Homing endonucleases"/>
    <property type="match status" value="1"/>
</dbReference>
<dbReference type="PROSITE" id="PS50819">
    <property type="entry name" value="INTEIN_ENDONUCLEASE"/>
    <property type="match status" value="1"/>
</dbReference>
<evidence type="ECO:0000255" key="1">
    <source>
        <dbReference type="HAMAP-Rule" id="MF_01420"/>
    </source>
</evidence>
<keyword id="KW-0131">Cell cycle</keyword>
<keyword id="KW-0132">Cell division</keyword>
<keyword id="KW-0238">DNA-binding</keyword>
<keyword id="KW-1185">Reference proteome</keyword>
<organism>
    <name type="scientific">Clostridium botulinum (strain Hall / ATCC 3502 / NCTC 13319 / Type A)</name>
    <dbReference type="NCBI Taxonomy" id="441771"/>
    <lineage>
        <taxon>Bacteria</taxon>
        <taxon>Bacillati</taxon>
        <taxon>Bacillota</taxon>
        <taxon>Clostridia</taxon>
        <taxon>Eubacteriales</taxon>
        <taxon>Clostridiaceae</taxon>
        <taxon>Clostridium</taxon>
    </lineage>
</organism>
<accession>A5I7A0</accession>
<accession>A7G8I3</accession>
<comment type="function">
    <text evidence="1">Involved in cell division and chromosome segregation.</text>
</comment>
<comment type="similarity">
    <text evidence="1">Belongs to the WhiA family.</text>
</comment>
<reference key="1">
    <citation type="journal article" date="2007" name="Genome Res.">
        <title>Genome sequence of a proteolytic (Group I) Clostridium botulinum strain Hall A and comparative analysis of the clostridial genomes.</title>
        <authorList>
            <person name="Sebaihia M."/>
            <person name="Peck M.W."/>
            <person name="Minton N.P."/>
            <person name="Thomson N.R."/>
            <person name="Holden M.T.G."/>
            <person name="Mitchell W.J."/>
            <person name="Carter A.T."/>
            <person name="Bentley S.D."/>
            <person name="Mason D.R."/>
            <person name="Crossman L."/>
            <person name="Paul C.J."/>
            <person name="Ivens A."/>
            <person name="Wells-Bennik M.H.J."/>
            <person name="Davis I.J."/>
            <person name="Cerdeno-Tarraga A.M."/>
            <person name="Churcher C."/>
            <person name="Quail M.A."/>
            <person name="Chillingworth T."/>
            <person name="Feltwell T."/>
            <person name="Fraser A."/>
            <person name="Goodhead I."/>
            <person name="Hance Z."/>
            <person name="Jagels K."/>
            <person name="Larke N."/>
            <person name="Maddison M."/>
            <person name="Moule S."/>
            <person name="Mungall K."/>
            <person name="Norbertczak H."/>
            <person name="Rabbinowitsch E."/>
            <person name="Sanders M."/>
            <person name="Simmonds M."/>
            <person name="White B."/>
            <person name="Whithead S."/>
            <person name="Parkhill J."/>
        </authorList>
    </citation>
    <scope>NUCLEOTIDE SEQUENCE [LARGE SCALE GENOMIC DNA]</scope>
    <source>
        <strain>Hall / ATCC 3502 / NCTC 13319 / Type A</strain>
    </source>
</reference>
<reference key="2">
    <citation type="journal article" date="2007" name="PLoS ONE">
        <title>Analysis of the neurotoxin complex genes in Clostridium botulinum A1-A4 and B1 strains: BoNT/A3, /Ba4 and /B1 clusters are located within plasmids.</title>
        <authorList>
            <person name="Smith T.J."/>
            <person name="Hill K.K."/>
            <person name="Foley B.T."/>
            <person name="Detter J.C."/>
            <person name="Munk A.C."/>
            <person name="Bruce D.C."/>
            <person name="Doggett N.A."/>
            <person name="Smith L.A."/>
            <person name="Marks J.D."/>
            <person name="Xie G."/>
            <person name="Brettin T.S."/>
        </authorList>
    </citation>
    <scope>NUCLEOTIDE SEQUENCE [LARGE SCALE GENOMIC DNA]</scope>
    <source>
        <strain>Hall / ATCC 3502 / NCTC 13319 / Type A</strain>
    </source>
</reference>
<name>WHIA_CLOBH</name>
<feature type="chain" id="PRO_0000376460" description="Probable cell division protein WhiA">
    <location>
        <begin position="1"/>
        <end position="315"/>
    </location>
</feature>
<feature type="DNA-binding region" description="H-T-H motif" evidence="1">
    <location>
        <begin position="280"/>
        <end position="313"/>
    </location>
</feature>
<sequence length="315" mass="35924">MSFSLKVKNEVCKHVEVNKQEAIAELSAIMKVSGTLLFTNKQFNFKITTENAAIARLVFKILKEHFGIHTEIMIKKNNSLKKNNIYIILISEEEGVKSLLKEVGIIKETINVFSLDYNIPKSIIECDECRRAYIRGAFLGGGSISNPEKTYHLEFVTHNEEYAKDLSNLINSYNLNSKVIKRKNSYIIYLKEGEQIVDLLNIIGAHASLLELENVRIMKEMRNNVNRLVNCETANLSKTVNAAVRQVESIKFIEREIGLGRLPKNLRDVAELRIKYPDESLRELGKMLNPPVGKSGVNHRLRRIEKIADELKQGI</sequence>